<reference key="1">
    <citation type="journal article" date="1998" name="Kidney Int.">
        <title>Expression of CD27 and ischemia/reperfusion-induced expression of its ligand Siva in rat kidneys.</title>
        <authorList>
            <person name="Padanilam B.J."/>
            <person name="Lewington A.J.P."/>
            <person name="Hammerman M.R."/>
        </authorList>
    </citation>
    <scope>NUCLEOTIDE SEQUENCE [MRNA]</scope>
    <scope>TISSUE SPECIFICITY</scope>
    <scope>INDUCTION</scope>
    <source>
        <strain>Sprague-Dawley</strain>
        <tissue>Kidney</tissue>
    </source>
</reference>
<comment type="function">
    <text evidence="1">Induces CD27-mediated apoptosis. Inhibits BCL2L1 isoform Bcl-x(L) anti-apoptotic activity. Inhibits activation of NF-kappa-B and promotes T-cell receptor-mediated apoptosis (By similarity).</text>
</comment>
<comment type="cofactor">
    <cofactor evidence="1">
        <name>Zn(2+)</name>
        <dbReference type="ChEBI" id="CHEBI:29105"/>
    </cofactor>
    <text evidence="1">Binds 3 Zn(2+) ions.</text>
</comment>
<comment type="subunit">
    <text evidence="1">Binds through its N-terminal region to the C-terminus of CD27 and to PXMP2/PMP22. Binds to the C-terminus of TNFRSF18/GITR. Binds to BCL2L1/BCLX isoform Bcl-x(L) but not to BAX (By similarity).</text>
</comment>
<comment type="subcellular location">
    <subcellularLocation>
        <location evidence="1">Cytoplasm</location>
    </subcellularLocation>
    <subcellularLocation>
        <location evidence="1">Nucleus</location>
    </subcellularLocation>
    <text evidence="1">In the nucleus, accumulates in dot-like structures.</text>
</comment>
<comment type="tissue specificity">
    <text evidence="3">In post-ischemic kidney, found in cells lining the S3 segment of proximal tubules at 12 hours and 1 day post-ischemia. At five and seven days post-ischemia, found in epithelial cells of papillary proliferations in regenerating tubules.</text>
</comment>
<comment type="induction">
    <text evidence="3">By ischemia.</text>
</comment>
<proteinExistence type="evidence at transcript level"/>
<name>SIVA_RAT</name>
<sequence length="177" mass="18899">MPKRSCPFTDAAPLQLKVHVSPRELSHGVFAERYSREVFERTKQLLFQGAQAYRDHIWGEGCSINHLPEPLKPGLVGAPQAARGQMLIGPDGRLTRCQAQASEAGLPGAAPIACSSCVRSVDGKAVCSQCERALCGQCVYTCWGCGALACVLCGLADYADDDDGEKTLCTSCAMFEA</sequence>
<evidence type="ECO:0000250" key="1"/>
<evidence type="ECO:0000250" key="2">
    <source>
        <dbReference type="UniProtKB" id="O15304"/>
    </source>
</evidence>
<evidence type="ECO:0000269" key="3">
    <source>
    </source>
</evidence>
<feature type="chain" id="PRO_0000097776" description="Apoptosis regulatory protein Siva">
    <location>
        <begin position="1"/>
        <end position="177"/>
    </location>
</feature>
<feature type="region of interest" description="Interaction with BCL2L1 isoform Bcl-x(L) and inhibition of BCL2L1 anti-apoptotic activity" evidence="1">
    <location>
        <begin position="36"/>
        <end position="55"/>
    </location>
</feature>
<feature type="modified residue" description="Phosphotyrosine; by ABL2" evidence="2">
    <location>
        <position position="34"/>
    </location>
</feature>
<protein>
    <recommendedName>
        <fullName>Apoptosis regulatory protein Siva</fullName>
    </recommendedName>
    <alternativeName>
        <fullName>CD27-binding protein</fullName>
        <shortName>CD27BP</shortName>
    </alternativeName>
</protein>
<dbReference type="RefSeq" id="NP_001381466.1">
    <property type="nucleotide sequence ID" value="NM_001394537.1"/>
</dbReference>
<dbReference type="RefSeq" id="XP_006240707.1">
    <property type="nucleotide sequence ID" value="XM_006240645.3"/>
</dbReference>
<dbReference type="FunCoup" id="P59692">
    <property type="interactions" value="926"/>
</dbReference>
<dbReference type="STRING" id="10116.ENSRNOP00000034257"/>
<dbReference type="PhosphoSitePlus" id="P59692"/>
<dbReference type="PaxDb" id="10116-ENSRNOP00000034257"/>
<dbReference type="Ensembl" id="ENSRNOT00000031788.6">
    <property type="protein sequence ID" value="ENSRNOP00000034257.4"/>
    <property type="gene ID" value="ENSRNOG00000028640.8"/>
</dbReference>
<dbReference type="GeneID" id="362791"/>
<dbReference type="UCSC" id="RGD:1561872">
    <property type="organism name" value="rat"/>
</dbReference>
<dbReference type="AGR" id="RGD:1561872"/>
<dbReference type="RGD" id="1561872">
    <property type="gene designation" value="Siva1"/>
</dbReference>
<dbReference type="eggNOG" id="ENOG502S2B7">
    <property type="taxonomic scope" value="Eukaryota"/>
</dbReference>
<dbReference type="GeneTree" id="ENSGT00390000004842"/>
<dbReference type="HOGENOM" id="CLU_127299_0_0_1"/>
<dbReference type="InParanoid" id="P59692"/>
<dbReference type="OMA" id="AQACMDP"/>
<dbReference type="OrthoDB" id="60860at2759"/>
<dbReference type="PhylomeDB" id="P59692"/>
<dbReference type="TreeFam" id="TF332962"/>
<dbReference type="PRO" id="PR:P59692"/>
<dbReference type="Proteomes" id="UP000002494">
    <property type="component" value="Chromosome 6"/>
</dbReference>
<dbReference type="Bgee" id="ENSRNOG00000028640">
    <property type="expression patterns" value="Expressed in thymus and 19 other cell types or tissues"/>
</dbReference>
<dbReference type="ExpressionAtlas" id="P59692">
    <property type="expression patterns" value="baseline and differential"/>
</dbReference>
<dbReference type="GO" id="GO:0005737">
    <property type="term" value="C:cytoplasm"/>
    <property type="evidence" value="ECO:0007669"/>
    <property type="project" value="UniProtKB-SubCell"/>
</dbReference>
<dbReference type="GO" id="GO:0005654">
    <property type="term" value="C:nucleoplasm"/>
    <property type="evidence" value="ECO:0007669"/>
    <property type="project" value="Ensembl"/>
</dbReference>
<dbReference type="GO" id="GO:0005175">
    <property type="term" value="F:CD27 receptor binding"/>
    <property type="evidence" value="ECO:0000266"/>
    <property type="project" value="RGD"/>
</dbReference>
<dbReference type="GO" id="GO:0005164">
    <property type="term" value="F:tumor necrosis factor receptor binding"/>
    <property type="evidence" value="ECO:0000266"/>
    <property type="project" value="RGD"/>
</dbReference>
<dbReference type="GO" id="GO:0001618">
    <property type="term" value="F:virus receptor activity"/>
    <property type="evidence" value="ECO:0000266"/>
    <property type="project" value="RGD"/>
</dbReference>
<dbReference type="GO" id="GO:0008270">
    <property type="term" value="F:zinc ion binding"/>
    <property type="evidence" value="ECO:0000266"/>
    <property type="project" value="RGD"/>
</dbReference>
<dbReference type="GO" id="GO:0097191">
    <property type="term" value="P:extrinsic apoptotic signaling pathway"/>
    <property type="evidence" value="ECO:0000266"/>
    <property type="project" value="RGD"/>
</dbReference>
<dbReference type="InterPro" id="IPR022773">
    <property type="entry name" value="Siva"/>
</dbReference>
<dbReference type="PANTHER" id="PTHR14365">
    <property type="entry name" value="APOPTOSIS REGULATORY PROTEIN SIVA"/>
    <property type="match status" value="1"/>
</dbReference>
<dbReference type="PANTHER" id="PTHR14365:SF1">
    <property type="entry name" value="APOPTOSIS REGULATORY PROTEIN SIVA"/>
    <property type="match status" value="1"/>
</dbReference>
<dbReference type="Pfam" id="PF05458">
    <property type="entry name" value="Siva"/>
    <property type="match status" value="1"/>
</dbReference>
<dbReference type="PIRSF" id="PIRSF038096">
    <property type="entry name" value="Siva_cd27_bd"/>
    <property type="match status" value="1"/>
</dbReference>
<keyword id="KW-0053">Apoptosis</keyword>
<keyword id="KW-0963">Cytoplasm</keyword>
<keyword id="KW-0479">Metal-binding</keyword>
<keyword id="KW-0539">Nucleus</keyword>
<keyword id="KW-0597">Phosphoprotein</keyword>
<keyword id="KW-1185">Reference proteome</keyword>
<keyword id="KW-0862">Zinc</keyword>
<accession>P59692</accession>
<organism>
    <name type="scientific">Rattus norvegicus</name>
    <name type="common">Rat</name>
    <dbReference type="NCBI Taxonomy" id="10116"/>
    <lineage>
        <taxon>Eukaryota</taxon>
        <taxon>Metazoa</taxon>
        <taxon>Chordata</taxon>
        <taxon>Craniata</taxon>
        <taxon>Vertebrata</taxon>
        <taxon>Euteleostomi</taxon>
        <taxon>Mammalia</taxon>
        <taxon>Eutheria</taxon>
        <taxon>Euarchontoglires</taxon>
        <taxon>Glires</taxon>
        <taxon>Rodentia</taxon>
        <taxon>Myomorpha</taxon>
        <taxon>Muroidea</taxon>
        <taxon>Muridae</taxon>
        <taxon>Murinae</taxon>
        <taxon>Rattus</taxon>
    </lineage>
</organism>
<gene>
    <name type="primary">Siva1</name>
    <name type="synonym">Siva</name>
</gene>